<comment type="function">
    <text evidence="2">Catalyzes the hydrolysis of N(4)-acetylcytidine (ac4C).</text>
</comment>
<comment type="catalytic activity">
    <reaction evidence="2">
        <text>N(4)-acetylcytidine + H2O = cytidine + acetate + H(+)</text>
        <dbReference type="Rhea" id="RHEA:62932"/>
        <dbReference type="ChEBI" id="CHEBI:15377"/>
        <dbReference type="ChEBI" id="CHEBI:15378"/>
        <dbReference type="ChEBI" id="CHEBI:17562"/>
        <dbReference type="ChEBI" id="CHEBI:30089"/>
        <dbReference type="ChEBI" id="CHEBI:70989"/>
        <dbReference type="EC" id="3.5.1.135"/>
    </reaction>
</comment>
<comment type="catalytic activity">
    <reaction evidence="2">
        <text>N(4)-acetyl-2'-deoxycytidine + H2O = 2'-deoxycytidine + acetate + H(+)</text>
        <dbReference type="Rhea" id="RHEA:62936"/>
        <dbReference type="ChEBI" id="CHEBI:15377"/>
        <dbReference type="ChEBI" id="CHEBI:15378"/>
        <dbReference type="ChEBI" id="CHEBI:15698"/>
        <dbReference type="ChEBI" id="CHEBI:30089"/>
        <dbReference type="ChEBI" id="CHEBI:146133"/>
        <dbReference type="EC" id="3.5.1.135"/>
    </reaction>
</comment>
<comment type="catalytic activity">
    <reaction evidence="2">
        <text>N(4)-acetylcytosine + H2O = cytosine + acetate + H(+)</text>
        <dbReference type="Rhea" id="RHEA:62940"/>
        <dbReference type="ChEBI" id="CHEBI:15377"/>
        <dbReference type="ChEBI" id="CHEBI:15378"/>
        <dbReference type="ChEBI" id="CHEBI:16040"/>
        <dbReference type="ChEBI" id="CHEBI:30089"/>
        <dbReference type="ChEBI" id="CHEBI:146134"/>
        <dbReference type="EC" id="3.5.1.135"/>
    </reaction>
</comment>
<comment type="similarity">
    <text evidence="2">Belongs to the N(4)-acetylcytidine amidohydrolase family.</text>
</comment>
<accession>Q0HJR6</accession>
<name>AC4CH_SHESM</name>
<protein>
    <recommendedName>
        <fullName evidence="2">N(4)-acetylcytidine amidohydrolase</fullName>
        <shortName evidence="2">ac4C amidohydrolase</shortName>
        <ecNumber evidence="2">3.5.1.135</ecNumber>
    </recommendedName>
</protein>
<keyword id="KW-0378">Hydrolase</keyword>
<proteinExistence type="inferred from homology"/>
<gene>
    <name type="ordered locus">Shewmr4_1625</name>
</gene>
<sequence length="103" mass="12049">MLTKITFFERFEQDILSGAKTITLRDEAESHVFAGQILPVSTFEDDRWFCDIEVIEVVPVLFSELTEQHAAQENMTLPELRRVIQEIYPGLEQLFQIRFCLVQ</sequence>
<organism>
    <name type="scientific">Shewanella sp. (strain MR-4)</name>
    <dbReference type="NCBI Taxonomy" id="60480"/>
    <lineage>
        <taxon>Bacteria</taxon>
        <taxon>Pseudomonadati</taxon>
        <taxon>Pseudomonadota</taxon>
        <taxon>Gammaproteobacteria</taxon>
        <taxon>Alteromonadales</taxon>
        <taxon>Shewanellaceae</taxon>
        <taxon>Shewanella</taxon>
    </lineage>
</organism>
<evidence type="ECO:0000255" key="1"/>
<evidence type="ECO:0000255" key="2">
    <source>
        <dbReference type="HAMAP-Rule" id="MF_00684"/>
    </source>
</evidence>
<feature type="chain" id="PRO_1000044957" description="N(4)-acetylcytidine amidohydrolase">
    <location>
        <begin position="1"/>
        <end position="103"/>
    </location>
</feature>
<feature type="domain" description="ASCH" evidence="1">
    <location>
        <begin position="6"/>
        <end position="92"/>
    </location>
</feature>
<feature type="active site" description="Proton acceptor" evidence="2">
    <location>
        <position position="20"/>
    </location>
</feature>
<feature type="active site" description="Nucleophile" evidence="2">
    <location>
        <position position="23"/>
    </location>
</feature>
<feature type="active site" description="Proton donor" evidence="2">
    <location>
        <position position="73"/>
    </location>
</feature>
<reference key="1">
    <citation type="submission" date="2006-08" db="EMBL/GenBank/DDBJ databases">
        <title>Complete sequence of Shewanella sp. MR-4.</title>
        <authorList>
            <consortium name="US DOE Joint Genome Institute"/>
            <person name="Copeland A."/>
            <person name="Lucas S."/>
            <person name="Lapidus A."/>
            <person name="Barry K."/>
            <person name="Detter J.C."/>
            <person name="Glavina del Rio T."/>
            <person name="Hammon N."/>
            <person name="Israni S."/>
            <person name="Dalin E."/>
            <person name="Tice H."/>
            <person name="Pitluck S."/>
            <person name="Kiss H."/>
            <person name="Brettin T."/>
            <person name="Bruce D."/>
            <person name="Han C."/>
            <person name="Tapia R."/>
            <person name="Gilna P."/>
            <person name="Schmutz J."/>
            <person name="Larimer F."/>
            <person name="Land M."/>
            <person name="Hauser L."/>
            <person name="Kyrpides N."/>
            <person name="Mikhailova N."/>
            <person name="Nealson K."/>
            <person name="Konstantinidis K."/>
            <person name="Klappenbach J."/>
            <person name="Tiedje J."/>
            <person name="Richardson P."/>
        </authorList>
    </citation>
    <scope>NUCLEOTIDE SEQUENCE [LARGE SCALE GENOMIC DNA]</scope>
    <source>
        <strain>MR-4</strain>
    </source>
</reference>
<dbReference type="EC" id="3.5.1.135" evidence="2"/>
<dbReference type="EMBL" id="CP000446">
    <property type="protein sequence ID" value="ABI38701.1"/>
    <property type="molecule type" value="Genomic_DNA"/>
</dbReference>
<dbReference type="RefSeq" id="WP_011622404.1">
    <property type="nucleotide sequence ID" value="NC_008321.1"/>
</dbReference>
<dbReference type="SMR" id="Q0HJR6"/>
<dbReference type="KEGG" id="she:Shewmr4_1625"/>
<dbReference type="HOGENOM" id="CLU_152586_0_0_6"/>
<dbReference type="GO" id="GO:0005829">
    <property type="term" value="C:cytosol"/>
    <property type="evidence" value="ECO:0007669"/>
    <property type="project" value="TreeGrafter"/>
</dbReference>
<dbReference type="GO" id="GO:0016813">
    <property type="term" value="F:hydrolase activity, acting on carbon-nitrogen (but not peptide) bonds, in linear amidines"/>
    <property type="evidence" value="ECO:0007669"/>
    <property type="project" value="UniProtKB-UniRule"/>
</dbReference>
<dbReference type="GO" id="GO:0106251">
    <property type="term" value="F:N4-acetylcytidine amidohydrolase activity"/>
    <property type="evidence" value="ECO:0007669"/>
    <property type="project" value="RHEA"/>
</dbReference>
<dbReference type="CDD" id="cd06552">
    <property type="entry name" value="ASCH_yqfb_like"/>
    <property type="match status" value="1"/>
</dbReference>
<dbReference type="Gene3D" id="2.30.130.30">
    <property type="entry name" value="Hypothetical protein"/>
    <property type="match status" value="1"/>
</dbReference>
<dbReference type="HAMAP" id="MF_00684">
    <property type="entry name" value="ac4C_amidohydr"/>
    <property type="match status" value="1"/>
</dbReference>
<dbReference type="InterPro" id="IPR008314">
    <property type="entry name" value="AC4CH"/>
</dbReference>
<dbReference type="InterPro" id="IPR007374">
    <property type="entry name" value="ASCH_domain"/>
</dbReference>
<dbReference type="InterPro" id="IPR015947">
    <property type="entry name" value="PUA-like_sf"/>
</dbReference>
<dbReference type="NCBIfam" id="NF003443">
    <property type="entry name" value="PRK04980.1"/>
    <property type="match status" value="1"/>
</dbReference>
<dbReference type="PANTHER" id="PTHR38088">
    <property type="entry name" value="UCP029143 FAMILY PROTEIN"/>
    <property type="match status" value="1"/>
</dbReference>
<dbReference type="PANTHER" id="PTHR38088:SF2">
    <property type="entry name" value="UCP029143 FAMILY PROTEIN"/>
    <property type="match status" value="1"/>
</dbReference>
<dbReference type="Pfam" id="PF04266">
    <property type="entry name" value="ASCH"/>
    <property type="match status" value="1"/>
</dbReference>
<dbReference type="PIRSF" id="PIRSF029143">
    <property type="entry name" value="UCP029143"/>
    <property type="match status" value="1"/>
</dbReference>
<dbReference type="SMART" id="SM01022">
    <property type="entry name" value="ASCH"/>
    <property type="match status" value="1"/>
</dbReference>
<dbReference type="SUPFAM" id="SSF88697">
    <property type="entry name" value="PUA domain-like"/>
    <property type="match status" value="1"/>
</dbReference>